<accession>C1CBB2</accession>
<name>RSMH_STRP7</name>
<dbReference type="EC" id="2.1.1.199" evidence="1"/>
<dbReference type="EMBL" id="CP000918">
    <property type="protein sequence ID" value="ACO16832.1"/>
    <property type="molecule type" value="Genomic_DNA"/>
</dbReference>
<dbReference type="RefSeq" id="WP_000159408.1">
    <property type="nucleotide sequence ID" value="NC_012468.1"/>
</dbReference>
<dbReference type="SMR" id="C1CBB2"/>
<dbReference type="GeneID" id="45652198"/>
<dbReference type="KEGG" id="snm:SP70585_0397"/>
<dbReference type="HOGENOM" id="CLU_038422_2_0_9"/>
<dbReference type="Proteomes" id="UP000002211">
    <property type="component" value="Chromosome"/>
</dbReference>
<dbReference type="GO" id="GO:0005737">
    <property type="term" value="C:cytoplasm"/>
    <property type="evidence" value="ECO:0007669"/>
    <property type="project" value="UniProtKB-SubCell"/>
</dbReference>
<dbReference type="GO" id="GO:0071424">
    <property type="term" value="F:rRNA (cytosine-N4-)-methyltransferase activity"/>
    <property type="evidence" value="ECO:0007669"/>
    <property type="project" value="UniProtKB-UniRule"/>
</dbReference>
<dbReference type="GO" id="GO:0070475">
    <property type="term" value="P:rRNA base methylation"/>
    <property type="evidence" value="ECO:0007669"/>
    <property type="project" value="UniProtKB-UniRule"/>
</dbReference>
<dbReference type="FunFam" id="1.10.150.170:FF:000001">
    <property type="entry name" value="Ribosomal RNA small subunit methyltransferase H"/>
    <property type="match status" value="1"/>
</dbReference>
<dbReference type="Gene3D" id="1.10.150.170">
    <property type="entry name" value="Putative methyltransferase TM0872, insert domain"/>
    <property type="match status" value="1"/>
</dbReference>
<dbReference type="Gene3D" id="3.40.50.150">
    <property type="entry name" value="Vaccinia Virus protein VP39"/>
    <property type="match status" value="1"/>
</dbReference>
<dbReference type="HAMAP" id="MF_01007">
    <property type="entry name" value="16SrRNA_methyltr_H"/>
    <property type="match status" value="1"/>
</dbReference>
<dbReference type="InterPro" id="IPR002903">
    <property type="entry name" value="RsmH"/>
</dbReference>
<dbReference type="InterPro" id="IPR023397">
    <property type="entry name" value="SAM-dep_MeTrfase_MraW_recog"/>
</dbReference>
<dbReference type="InterPro" id="IPR029063">
    <property type="entry name" value="SAM-dependent_MTases_sf"/>
</dbReference>
<dbReference type="NCBIfam" id="TIGR00006">
    <property type="entry name" value="16S rRNA (cytosine(1402)-N(4))-methyltransferase RsmH"/>
    <property type="match status" value="1"/>
</dbReference>
<dbReference type="PANTHER" id="PTHR11265:SF0">
    <property type="entry name" value="12S RRNA N4-METHYLCYTIDINE METHYLTRANSFERASE"/>
    <property type="match status" value="1"/>
</dbReference>
<dbReference type="PANTHER" id="PTHR11265">
    <property type="entry name" value="S-ADENOSYL-METHYLTRANSFERASE MRAW"/>
    <property type="match status" value="1"/>
</dbReference>
<dbReference type="Pfam" id="PF01795">
    <property type="entry name" value="Methyltransf_5"/>
    <property type="match status" value="1"/>
</dbReference>
<dbReference type="PIRSF" id="PIRSF004486">
    <property type="entry name" value="MraW"/>
    <property type="match status" value="1"/>
</dbReference>
<dbReference type="SUPFAM" id="SSF81799">
    <property type="entry name" value="Putative methyltransferase TM0872, insert domain"/>
    <property type="match status" value="1"/>
</dbReference>
<dbReference type="SUPFAM" id="SSF53335">
    <property type="entry name" value="S-adenosyl-L-methionine-dependent methyltransferases"/>
    <property type="match status" value="1"/>
</dbReference>
<comment type="function">
    <text evidence="1">Specifically methylates the N4 position of cytidine in position 1402 (C1402) of 16S rRNA.</text>
</comment>
<comment type="catalytic activity">
    <reaction evidence="1">
        <text>cytidine(1402) in 16S rRNA + S-adenosyl-L-methionine = N(4)-methylcytidine(1402) in 16S rRNA + S-adenosyl-L-homocysteine + H(+)</text>
        <dbReference type="Rhea" id="RHEA:42928"/>
        <dbReference type="Rhea" id="RHEA-COMP:10286"/>
        <dbReference type="Rhea" id="RHEA-COMP:10287"/>
        <dbReference type="ChEBI" id="CHEBI:15378"/>
        <dbReference type="ChEBI" id="CHEBI:57856"/>
        <dbReference type="ChEBI" id="CHEBI:59789"/>
        <dbReference type="ChEBI" id="CHEBI:74506"/>
        <dbReference type="ChEBI" id="CHEBI:82748"/>
        <dbReference type="EC" id="2.1.1.199"/>
    </reaction>
</comment>
<comment type="subcellular location">
    <subcellularLocation>
        <location evidence="1">Cytoplasm</location>
    </subcellularLocation>
</comment>
<comment type="similarity">
    <text evidence="1">Belongs to the methyltransferase superfamily. RsmH family.</text>
</comment>
<reference key="1">
    <citation type="journal article" date="2010" name="Genome Biol.">
        <title>Structure and dynamics of the pan-genome of Streptococcus pneumoniae and closely related species.</title>
        <authorList>
            <person name="Donati C."/>
            <person name="Hiller N.L."/>
            <person name="Tettelin H."/>
            <person name="Muzzi A."/>
            <person name="Croucher N.J."/>
            <person name="Angiuoli S.V."/>
            <person name="Oggioni M."/>
            <person name="Dunning Hotopp J.C."/>
            <person name="Hu F.Z."/>
            <person name="Riley D.R."/>
            <person name="Covacci A."/>
            <person name="Mitchell T.J."/>
            <person name="Bentley S.D."/>
            <person name="Kilian M."/>
            <person name="Ehrlich G.D."/>
            <person name="Rappuoli R."/>
            <person name="Moxon E.R."/>
            <person name="Masignani V."/>
        </authorList>
    </citation>
    <scope>NUCLEOTIDE SEQUENCE [LARGE SCALE GENOMIC DNA]</scope>
    <source>
        <strain>70585</strain>
    </source>
</reference>
<sequence>MTKEFHHVTVLLHETIDMLDVKPDGIYVDATLGGAGHSEYLLSKLSEKGHLYAFDQDQNAIDNAQKRLAPYIEKGMVTFIKDNFRHLQARLREAGVQEIDGICYDLGVSSPQLDQRERGFSYKKDAPLDMRMNQDASLTAYEVVNNYDYHDLVRIFFKYGEDKFSKQIARKIEQAREVKPIETTTELAEIIKLVKPAKELKKKGHPAKQIFQAIRIEVNDELGAADESIQQAMDMLALDGRISVITFHSLEDRLTKQLFKEASTVEVPKGLPFIPDDLKPKMELVSRKPILPSAEELEANNRSHSAKLRVARKIHK</sequence>
<organism>
    <name type="scientific">Streptococcus pneumoniae (strain 70585)</name>
    <dbReference type="NCBI Taxonomy" id="488221"/>
    <lineage>
        <taxon>Bacteria</taxon>
        <taxon>Bacillati</taxon>
        <taxon>Bacillota</taxon>
        <taxon>Bacilli</taxon>
        <taxon>Lactobacillales</taxon>
        <taxon>Streptococcaceae</taxon>
        <taxon>Streptococcus</taxon>
    </lineage>
</organism>
<keyword id="KW-0963">Cytoplasm</keyword>
<keyword id="KW-0489">Methyltransferase</keyword>
<keyword id="KW-0698">rRNA processing</keyword>
<keyword id="KW-0949">S-adenosyl-L-methionine</keyword>
<keyword id="KW-0808">Transferase</keyword>
<evidence type="ECO:0000255" key="1">
    <source>
        <dbReference type="HAMAP-Rule" id="MF_01007"/>
    </source>
</evidence>
<protein>
    <recommendedName>
        <fullName evidence="1">Ribosomal RNA small subunit methyltransferase H</fullName>
        <ecNumber evidence="1">2.1.1.199</ecNumber>
    </recommendedName>
    <alternativeName>
        <fullName evidence="1">16S rRNA m(4)C1402 methyltransferase</fullName>
    </alternativeName>
    <alternativeName>
        <fullName evidence="1">rRNA (cytosine-N(4)-)-methyltransferase RsmH</fullName>
    </alternativeName>
</protein>
<gene>
    <name evidence="1" type="primary">rsmH</name>
    <name type="synonym">mraW</name>
    <name type="ordered locus">SP70585_0397</name>
</gene>
<feature type="chain" id="PRO_0000387149" description="Ribosomal RNA small subunit methyltransferase H">
    <location>
        <begin position="1"/>
        <end position="316"/>
    </location>
</feature>
<feature type="binding site" evidence="1">
    <location>
        <begin position="35"/>
        <end position="37"/>
    </location>
    <ligand>
        <name>S-adenosyl-L-methionine</name>
        <dbReference type="ChEBI" id="CHEBI:59789"/>
    </ligand>
</feature>
<feature type="binding site" evidence="1">
    <location>
        <position position="55"/>
    </location>
    <ligand>
        <name>S-adenosyl-L-methionine</name>
        <dbReference type="ChEBI" id="CHEBI:59789"/>
    </ligand>
</feature>
<feature type="binding site" evidence="1">
    <location>
        <position position="84"/>
    </location>
    <ligand>
        <name>S-adenosyl-L-methionine</name>
        <dbReference type="ChEBI" id="CHEBI:59789"/>
    </ligand>
</feature>
<feature type="binding site" evidence="1">
    <location>
        <position position="105"/>
    </location>
    <ligand>
        <name>S-adenosyl-L-methionine</name>
        <dbReference type="ChEBI" id="CHEBI:59789"/>
    </ligand>
</feature>
<feature type="binding site" evidence="1">
    <location>
        <position position="112"/>
    </location>
    <ligand>
        <name>S-adenosyl-L-methionine</name>
        <dbReference type="ChEBI" id="CHEBI:59789"/>
    </ligand>
</feature>
<proteinExistence type="inferred from homology"/>